<feature type="initiator methionine" description="Removed" evidence="10">
    <location>
        <position position="1"/>
    </location>
</feature>
<feature type="chain" id="PRO_0000198728" description="Myosin regulatory light chain 2, ventricular/cardiac muscle isoform">
    <location>
        <begin position="2"/>
        <end position="166"/>
    </location>
</feature>
<feature type="domain" description="EF-hand 1" evidence="5">
    <location>
        <begin position="24"/>
        <end position="59"/>
    </location>
</feature>
<feature type="domain" description="EF-hand 2" evidence="5">
    <location>
        <begin position="94"/>
        <end position="129"/>
    </location>
</feature>
<feature type="domain" description="EF-hand 3" evidence="5">
    <location>
        <begin position="130"/>
        <end position="165"/>
    </location>
</feature>
<feature type="binding site" evidence="5">
    <location>
        <position position="37"/>
    </location>
    <ligand>
        <name>Ca(2+)</name>
        <dbReference type="ChEBI" id="CHEBI:29108"/>
    </ligand>
</feature>
<feature type="binding site" evidence="5">
    <location>
        <position position="39"/>
    </location>
    <ligand>
        <name>Ca(2+)</name>
        <dbReference type="ChEBI" id="CHEBI:29108"/>
    </ligand>
</feature>
<feature type="binding site" evidence="5">
    <location>
        <position position="41"/>
    </location>
    <ligand>
        <name>Ca(2+)</name>
        <dbReference type="ChEBI" id="CHEBI:29108"/>
    </ligand>
</feature>
<feature type="binding site" evidence="5">
    <location>
        <position position="48"/>
    </location>
    <ligand>
        <name>Ca(2+)</name>
        <dbReference type="ChEBI" id="CHEBI:29108"/>
    </ligand>
</feature>
<feature type="modified residue" description="N,N,N-trimethylalanine" evidence="10">
    <location>
        <position position="2"/>
    </location>
</feature>
<feature type="modified residue" description="Phosphoserine; by MLCK" evidence="9 11 18">
    <location>
        <position position="14"/>
    </location>
</feature>
<feature type="modified residue" description="Phosphoserine; by MLCK" evidence="9 11 18">
    <location>
        <position position="15"/>
    </location>
</feature>
<feature type="modified residue" description="Phosphoserine" evidence="11 18">
    <location>
        <position position="19"/>
    </location>
</feature>
<feature type="modified residue" description="Phosphothreonine" evidence="2">
    <location>
        <position position="52"/>
    </location>
</feature>
<feature type="mutagenesis site" description="Loss of cardiac myofibril assembly; when associated with A-15 and A-19. Loss of phosphorylation; when associated with A-15 and A-19. Loss of calcium sensitivity of force development; when associated with A-15 and A-19. Phosphorylation at Ser-19; when associated with A-15. Significant decrease in phosphorylation by MLCK; when associated with A-15. Adult lethality associated with early defects in cardiac twitch relaxation and torsion leading to dilated cardiomyopathy, heart failure and premature death; when associated with A-15. Significant acceleration of twitch relaxation in absence of changes in calcium transients; when associated with A-15. Absence of transmural phosphorylation gradient leading to alteration of torsion; when associated with A-14." evidence="6 11">
    <original>S</original>
    <variation>A</variation>
    <location>
        <position position="14"/>
    </location>
</feature>
<feature type="mutagenesis site" description="Loss of cardiac myofibril assembly; when associated with A-14 and A-19. Loss of phosphorylation; when associated with A-14 and A-19. Loss of calcium sensitivity of force development; when associated with A-14 and A-19. Increase of phosphorylation. Phosphorylation at Ser-14 and at Ser-19. Phosphorylation at Ser-19; when associated with A-14. Significant decrease in phosphorylation by MLCK; when associated with A-14. Adult lethality associated with early defects in cardiac twitch relaxation and torsion leading to dilated cardiomyopathy, heart failure and premature death; when associated with A-14. Significant acceleration of twitch relaxation in absence of changes in calcium transients; when associated with A-14. Absence of transmural phosphorylation gradient leading to alteration of torsion; when associated with A-14." evidence="6 11">
    <original>S</original>
    <variation>A</variation>
    <location>
        <position position="15"/>
    </location>
</feature>
<feature type="mutagenesis site" description="Loss of cardiac myofibril assembly; when associated with A-14 and A-15. Loss of phosphorylation; when associated with A-14 and A-15. Loss of calcium sensitivity of force development; when associated with A-14 and A-15." evidence="6">
    <original>S</original>
    <variation>A</variation>
    <location>
        <position position="19"/>
    </location>
</feature>
<feature type="sequence conflict" description="In Ref. 1; AAA39796." evidence="16" ref="1">
    <original>KK</original>
    <variation>LF</variation>
    <location>
        <begin position="4"/>
        <end position="5"/>
    </location>
</feature>
<feature type="sequence conflict" description="In Ref. 1; AAA39796." evidence="16" ref="1">
    <original>S</original>
    <variation>T</variation>
    <location>
        <position position="14"/>
    </location>
</feature>
<feature type="sequence conflict" description="In Ref. 3; AAH61144." evidence="16" ref="3">
    <original>E</original>
    <variation>G</variation>
    <location>
        <position position="128"/>
    </location>
</feature>
<keyword id="KW-0002">3D-structure</keyword>
<keyword id="KW-0106">Calcium</keyword>
<keyword id="KW-0963">Cytoplasm</keyword>
<keyword id="KW-0479">Metal-binding</keyword>
<keyword id="KW-0488">Methylation</keyword>
<keyword id="KW-0505">Motor protein</keyword>
<keyword id="KW-0514">Muscle protein</keyword>
<keyword id="KW-0518">Myosin</keyword>
<keyword id="KW-0597">Phosphoprotein</keyword>
<keyword id="KW-1185">Reference proteome</keyword>
<keyword id="KW-0677">Repeat</keyword>
<accession>P51667</accession>
<accession>Q6P8P4</accession>
<accession>Q9QVP3</accession>
<protein>
    <recommendedName>
        <fullName evidence="16">Myosin regulatory light chain 2, ventricular/cardiac muscle isoform</fullName>
        <shortName evidence="15">MLC-2</shortName>
        <shortName>MLC-2v</shortName>
    </recommendedName>
    <alternativeName>
        <fullName evidence="4">Myosin light chain 2, slow skeletal/ventricular muscle isoform</fullName>
        <shortName evidence="4">MLC-2s/v</shortName>
    </alternativeName>
</protein>
<dbReference type="EMBL" id="M91602">
    <property type="protein sequence ID" value="AAA39796.1"/>
    <property type="molecule type" value="mRNA"/>
</dbReference>
<dbReference type="EMBL" id="AK002367">
    <property type="protein sequence ID" value="BAB22045.1"/>
    <property type="molecule type" value="mRNA"/>
</dbReference>
<dbReference type="EMBL" id="AK146674">
    <property type="protein sequence ID" value="BAE27350.1"/>
    <property type="molecule type" value="mRNA"/>
</dbReference>
<dbReference type="EMBL" id="BC061144">
    <property type="protein sequence ID" value="AAH61144.1"/>
    <property type="molecule type" value="mRNA"/>
</dbReference>
<dbReference type="CCDS" id="CCDS39252.1"/>
<dbReference type="PIR" id="A42858">
    <property type="entry name" value="A42858"/>
</dbReference>
<dbReference type="RefSeq" id="NP_001371255.1">
    <property type="nucleotide sequence ID" value="NM_001384326.1"/>
</dbReference>
<dbReference type="RefSeq" id="NP_034991.3">
    <property type="nucleotide sequence ID" value="NM_010861.4"/>
</dbReference>
<dbReference type="PDB" id="8Q6T">
    <property type="method" value="EM"/>
    <property type="resolution" value="18.00 A"/>
    <property type="chains" value="E/F/L/M/T/U=7-166"/>
</dbReference>
<dbReference type="PDBsum" id="8Q6T"/>
<dbReference type="EMDB" id="EMD-18198"/>
<dbReference type="SMR" id="P51667"/>
<dbReference type="BioGRID" id="201659">
    <property type="interactions" value="5"/>
</dbReference>
<dbReference type="FunCoup" id="P51667">
    <property type="interactions" value="429"/>
</dbReference>
<dbReference type="IntAct" id="P51667">
    <property type="interactions" value="3"/>
</dbReference>
<dbReference type="MINT" id="P51667"/>
<dbReference type="STRING" id="10090.ENSMUSP00000107380"/>
<dbReference type="GlyGen" id="P51667">
    <property type="glycosylation" value="1 site, 1 O-linked glycan (1 site)"/>
</dbReference>
<dbReference type="iPTMnet" id="P51667"/>
<dbReference type="PhosphoSitePlus" id="P51667"/>
<dbReference type="jPOST" id="P51667"/>
<dbReference type="PaxDb" id="10090-ENSMUSP00000014080"/>
<dbReference type="PeptideAtlas" id="P51667"/>
<dbReference type="ProteomicsDB" id="291468"/>
<dbReference type="TopDownProteomics" id="P51667"/>
<dbReference type="Antibodypedia" id="31071">
    <property type="antibodies" value="412 antibodies from 38 providers"/>
</dbReference>
<dbReference type="DNASU" id="17906"/>
<dbReference type="Ensembl" id="ENSMUST00000014080.13">
    <property type="protein sequence ID" value="ENSMUSP00000014080.7"/>
    <property type="gene ID" value="ENSMUSG00000013936.13"/>
</dbReference>
<dbReference type="Ensembl" id="ENSMUST00000111751.8">
    <property type="protein sequence ID" value="ENSMUSP00000107380.2"/>
    <property type="gene ID" value="ENSMUSG00000013936.13"/>
</dbReference>
<dbReference type="GeneID" id="17906"/>
<dbReference type="KEGG" id="mmu:17906"/>
<dbReference type="UCSC" id="uc008zkp.1">
    <property type="organism name" value="mouse"/>
</dbReference>
<dbReference type="AGR" id="MGI:97272"/>
<dbReference type="CTD" id="4633"/>
<dbReference type="MGI" id="MGI:97272">
    <property type="gene designation" value="Myl2"/>
</dbReference>
<dbReference type="VEuPathDB" id="HostDB:ENSMUSG00000013936"/>
<dbReference type="eggNOG" id="KOG0031">
    <property type="taxonomic scope" value="Eukaryota"/>
</dbReference>
<dbReference type="GeneTree" id="ENSGT00940000155578"/>
<dbReference type="HOGENOM" id="CLU_061288_9_0_1"/>
<dbReference type="InParanoid" id="P51667"/>
<dbReference type="OMA" id="PVEWSAC"/>
<dbReference type="OrthoDB" id="10560at9989"/>
<dbReference type="PhylomeDB" id="P51667"/>
<dbReference type="TreeFam" id="TF314218"/>
<dbReference type="Reactome" id="R-MMU-390522">
    <property type="pathway name" value="Striated Muscle Contraction"/>
</dbReference>
<dbReference type="BioGRID-ORCS" id="17906">
    <property type="hits" value="0 hits in 77 CRISPR screens"/>
</dbReference>
<dbReference type="ChiTaRS" id="Myl2">
    <property type="organism name" value="mouse"/>
</dbReference>
<dbReference type="PRO" id="PR:P51667"/>
<dbReference type="Proteomes" id="UP000000589">
    <property type="component" value="Chromosome 5"/>
</dbReference>
<dbReference type="RNAct" id="P51667">
    <property type="molecule type" value="protein"/>
</dbReference>
<dbReference type="Bgee" id="ENSMUSG00000013936">
    <property type="expression patterns" value="Expressed in cardiac muscle of left ventricle and 113 other cell types or tissues"/>
</dbReference>
<dbReference type="ExpressionAtlas" id="P51667">
    <property type="expression patterns" value="baseline and differential"/>
</dbReference>
<dbReference type="GO" id="GO:0031672">
    <property type="term" value="C:A band"/>
    <property type="evidence" value="ECO:0007669"/>
    <property type="project" value="UniProtKB-SubCell"/>
</dbReference>
<dbReference type="GO" id="GO:0097512">
    <property type="term" value="C:cardiac myofibril"/>
    <property type="evidence" value="ECO:0007669"/>
    <property type="project" value="Ensembl"/>
</dbReference>
<dbReference type="GO" id="GO:0030016">
    <property type="term" value="C:myofibril"/>
    <property type="evidence" value="ECO:0000314"/>
    <property type="project" value="MGI"/>
</dbReference>
<dbReference type="GO" id="GO:0016459">
    <property type="term" value="C:myosin complex"/>
    <property type="evidence" value="ECO:0007669"/>
    <property type="project" value="UniProtKB-KW"/>
</dbReference>
<dbReference type="GO" id="GO:0003785">
    <property type="term" value="F:actin monomer binding"/>
    <property type="evidence" value="ECO:0007669"/>
    <property type="project" value="Ensembl"/>
</dbReference>
<dbReference type="GO" id="GO:0005509">
    <property type="term" value="F:calcium ion binding"/>
    <property type="evidence" value="ECO:0000266"/>
    <property type="project" value="MGI"/>
</dbReference>
<dbReference type="GO" id="GO:0008307">
    <property type="term" value="F:structural constituent of muscle"/>
    <property type="evidence" value="ECO:0000250"/>
    <property type="project" value="UniProtKB"/>
</dbReference>
<dbReference type="GO" id="GO:0060048">
    <property type="term" value="P:cardiac muscle contraction"/>
    <property type="evidence" value="ECO:0000316"/>
    <property type="project" value="MGI"/>
</dbReference>
<dbReference type="GO" id="GO:0055003">
    <property type="term" value="P:cardiac myofibril assembly"/>
    <property type="evidence" value="ECO:0000315"/>
    <property type="project" value="MGI"/>
</dbReference>
<dbReference type="GO" id="GO:0060047">
    <property type="term" value="P:heart contraction"/>
    <property type="evidence" value="ECO:0000314"/>
    <property type="project" value="UniProtKB"/>
</dbReference>
<dbReference type="GO" id="GO:0007507">
    <property type="term" value="P:heart development"/>
    <property type="evidence" value="ECO:0000314"/>
    <property type="project" value="UniProtKB"/>
</dbReference>
<dbReference type="GO" id="GO:0003007">
    <property type="term" value="P:heart morphogenesis"/>
    <property type="evidence" value="ECO:0000316"/>
    <property type="project" value="MGI"/>
</dbReference>
<dbReference type="GO" id="GO:0055001">
    <property type="term" value="P:muscle cell development"/>
    <property type="evidence" value="ECO:0000316"/>
    <property type="project" value="MGI"/>
</dbReference>
<dbReference type="GO" id="GO:0042694">
    <property type="term" value="P:muscle cell fate specification"/>
    <property type="evidence" value="ECO:0000315"/>
    <property type="project" value="MGI"/>
</dbReference>
<dbReference type="GO" id="GO:0030308">
    <property type="term" value="P:negative regulation of cell growth"/>
    <property type="evidence" value="ECO:0007669"/>
    <property type="project" value="Ensembl"/>
</dbReference>
<dbReference type="GO" id="GO:0098735">
    <property type="term" value="P:positive regulation of the force of heart contraction"/>
    <property type="evidence" value="ECO:0000314"/>
    <property type="project" value="UniProtKB"/>
</dbReference>
<dbReference type="GO" id="GO:0009791">
    <property type="term" value="P:post-embryonic development"/>
    <property type="evidence" value="ECO:0000316"/>
    <property type="project" value="MGI"/>
</dbReference>
<dbReference type="GO" id="GO:0055010">
    <property type="term" value="P:ventricular cardiac muscle tissue morphogenesis"/>
    <property type="evidence" value="ECO:0007669"/>
    <property type="project" value="Ensembl"/>
</dbReference>
<dbReference type="CDD" id="cd00051">
    <property type="entry name" value="EFh"/>
    <property type="match status" value="1"/>
</dbReference>
<dbReference type="FunFam" id="1.10.238.10:FF:000010">
    <property type="entry name" value="Myosin regulatory light chain 2, atrial isoform"/>
    <property type="match status" value="1"/>
</dbReference>
<dbReference type="FunFam" id="1.10.238.10:FF:000007">
    <property type="entry name" value="Putative myosin regulatory light chain sqh"/>
    <property type="match status" value="1"/>
</dbReference>
<dbReference type="Gene3D" id="1.10.238.10">
    <property type="entry name" value="EF-hand"/>
    <property type="match status" value="2"/>
</dbReference>
<dbReference type="InterPro" id="IPR011992">
    <property type="entry name" value="EF-hand-dom_pair"/>
</dbReference>
<dbReference type="InterPro" id="IPR018247">
    <property type="entry name" value="EF_Hand_1_Ca_BS"/>
</dbReference>
<dbReference type="InterPro" id="IPR002048">
    <property type="entry name" value="EF_hand_dom"/>
</dbReference>
<dbReference type="InterPro" id="IPR050403">
    <property type="entry name" value="Myosin_RLC"/>
</dbReference>
<dbReference type="PANTHER" id="PTHR23049">
    <property type="entry name" value="MYOSIN REGULATORY LIGHT CHAIN 2"/>
    <property type="match status" value="1"/>
</dbReference>
<dbReference type="Pfam" id="PF13499">
    <property type="entry name" value="EF-hand_7"/>
    <property type="match status" value="1"/>
</dbReference>
<dbReference type="SMART" id="SM00054">
    <property type="entry name" value="EFh"/>
    <property type="match status" value="3"/>
</dbReference>
<dbReference type="SUPFAM" id="SSF47473">
    <property type="entry name" value="EF-hand"/>
    <property type="match status" value="1"/>
</dbReference>
<dbReference type="PROSITE" id="PS00018">
    <property type="entry name" value="EF_HAND_1"/>
    <property type="match status" value="1"/>
</dbReference>
<dbReference type="PROSITE" id="PS50222">
    <property type="entry name" value="EF_HAND_2"/>
    <property type="match status" value="3"/>
</dbReference>
<sequence>MAPKKAKKRIEGGSSNVFSMFEQTQIQEFKEAFTIMDQNRDGFIDKNDLRDTFAALGRVNVKNEEIDEMIKEAPGPINFTVFLTMFGEKLKGADPEETILNAFKVFDPEGKGSLKADYVREMLTTQAERFSKEEIDQMFAAFPPDVTGNLDYKNLVHIITHGEEKD</sequence>
<evidence type="ECO:0000250" key="1"/>
<evidence type="ECO:0000250" key="2">
    <source>
        <dbReference type="UniProtKB" id="P08733"/>
    </source>
</evidence>
<evidence type="ECO:0000250" key="3">
    <source>
        <dbReference type="UniProtKB" id="P10916"/>
    </source>
</evidence>
<evidence type="ECO:0000250" key="4">
    <source>
        <dbReference type="UniProtKB" id="Q7M2V4"/>
    </source>
</evidence>
<evidence type="ECO:0000255" key="5">
    <source>
        <dbReference type="PROSITE-ProRule" id="PRU00448"/>
    </source>
</evidence>
<evidence type="ECO:0000269" key="6">
    <source>
    </source>
</evidence>
<evidence type="ECO:0000269" key="7">
    <source>
    </source>
</evidence>
<evidence type="ECO:0000269" key="8">
    <source>
    </source>
</evidence>
<evidence type="ECO:0000269" key="9">
    <source>
    </source>
</evidence>
<evidence type="ECO:0000269" key="10">
    <source>
    </source>
</evidence>
<evidence type="ECO:0000269" key="11">
    <source>
    </source>
</evidence>
<evidence type="ECO:0000269" key="12">
    <source>
    </source>
</evidence>
<evidence type="ECO:0000269" key="13">
    <source>
    </source>
</evidence>
<evidence type="ECO:0000269" key="14">
    <source>
    </source>
</evidence>
<evidence type="ECO:0000303" key="15">
    <source>
    </source>
</evidence>
<evidence type="ECO:0000305" key="16"/>
<evidence type="ECO:0000312" key="17">
    <source>
        <dbReference type="MGI" id="MGI:97272"/>
    </source>
</evidence>
<evidence type="ECO:0007744" key="18">
    <source>
    </source>
</evidence>
<proteinExistence type="evidence at protein level"/>
<gene>
    <name evidence="17" type="primary">Myl2</name>
    <name evidence="17" type="synonym">Mylpc</name>
</gene>
<name>MLRV_MOUSE</name>
<reference key="1">
    <citation type="journal article" date="1992" name="J. Biol. Chem.">
        <title>Myosin light chain-2 luciferase transgenic mice reveal distinct regulatory programs for cardiac and skeletal muscle-specific expression of a single contractile protein gene.</title>
        <authorList>
            <person name="Lee K.J."/>
            <person name="Ross R.S."/>
            <person name="Rockman H.A."/>
            <person name="Harris A.N."/>
            <person name="O'Brien T.X."/>
            <person name="Bilsen M."/>
            <person name="Shubeita H.E."/>
            <person name="Kandolf R."/>
            <person name="Brem G."/>
            <person name="Price J."/>
            <person name="Evans S.M."/>
            <person name="Zhu H."/>
            <person name="Franz W.M."/>
            <person name="Chien K.R."/>
        </authorList>
    </citation>
    <scope>NUCLEOTIDE SEQUENCE [MRNA]</scope>
    <scope>TISSUE SPECIFICITY</scope>
    <source>
        <strain>BALB/cJ</strain>
        <tissue>Heart muscle</tissue>
    </source>
</reference>
<reference key="2">
    <citation type="journal article" date="2005" name="Science">
        <title>The transcriptional landscape of the mammalian genome.</title>
        <authorList>
            <person name="Carninci P."/>
            <person name="Kasukawa T."/>
            <person name="Katayama S."/>
            <person name="Gough J."/>
            <person name="Frith M.C."/>
            <person name="Maeda N."/>
            <person name="Oyama R."/>
            <person name="Ravasi T."/>
            <person name="Lenhard B."/>
            <person name="Wells C."/>
            <person name="Kodzius R."/>
            <person name="Shimokawa K."/>
            <person name="Bajic V.B."/>
            <person name="Brenner S.E."/>
            <person name="Batalov S."/>
            <person name="Forrest A.R."/>
            <person name="Zavolan M."/>
            <person name="Davis M.J."/>
            <person name="Wilming L.G."/>
            <person name="Aidinis V."/>
            <person name="Allen J.E."/>
            <person name="Ambesi-Impiombato A."/>
            <person name="Apweiler R."/>
            <person name="Aturaliya R.N."/>
            <person name="Bailey T.L."/>
            <person name="Bansal M."/>
            <person name="Baxter L."/>
            <person name="Beisel K.W."/>
            <person name="Bersano T."/>
            <person name="Bono H."/>
            <person name="Chalk A.M."/>
            <person name="Chiu K.P."/>
            <person name="Choudhary V."/>
            <person name="Christoffels A."/>
            <person name="Clutterbuck D.R."/>
            <person name="Crowe M.L."/>
            <person name="Dalla E."/>
            <person name="Dalrymple B.P."/>
            <person name="de Bono B."/>
            <person name="Della Gatta G."/>
            <person name="di Bernardo D."/>
            <person name="Down T."/>
            <person name="Engstrom P."/>
            <person name="Fagiolini M."/>
            <person name="Faulkner G."/>
            <person name="Fletcher C.F."/>
            <person name="Fukushima T."/>
            <person name="Furuno M."/>
            <person name="Futaki S."/>
            <person name="Gariboldi M."/>
            <person name="Georgii-Hemming P."/>
            <person name="Gingeras T.R."/>
            <person name="Gojobori T."/>
            <person name="Green R.E."/>
            <person name="Gustincich S."/>
            <person name="Harbers M."/>
            <person name="Hayashi Y."/>
            <person name="Hensch T.K."/>
            <person name="Hirokawa N."/>
            <person name="Hill D."/>
            <person name="Huminiecki L."/>
            <person name="Iacono M."/>
            <person name="Ikeo K."/>
            <person name="Iwama A."/>
            <person name="Ishikawa T."/>
            <person name="Jakt M."/>
            <person name="Kanapin A."/>
            <person name="Katoh M."/>
            <person name="Kawasawa Y."/>
            <person name="Kelso J."/>
            <person name="Kitamura H."/>
            <person name="Kitano H."/>
            <person name="Kollias G."/>
            <person name="Krishnan S.P."/>
            <person name="Kruger A."/>
            <person name="Kummerfeld S.K."/>
            <person name="Kurochkin I.V."/>
            <person name="Lareau L.F."/>
            <person name="Lazarevic D."/>
            <person name="Lipovich L."/>
            <person name="Liu J."/>
            <person name="Liuni S."/>
            <person name="McWilliam S."/>
            <person name="Madan Babu M."/>
            <person name="Madera M."/>
            <person name="Marchionni L."/>
            <person name="Matsuda H."/>
            <person name="Matsuzawa S."/>
            <person name="Miki H."/>
            <person name="Mignone F."/>
            <person name="Miyake S."/>
            <person name="Morris K."/>
            <person name="Mottagui-Tabar S."/>
            <person name="Mulder N."/>
            <person name="Nakano N."/>
            <person name="Nakauchi H."/>
            <person name="Ng P."/>
            <person name="Nilsson R."/>
            <person name="Nishiguchi S."/>
            <person name="Nishikawa S."/>
            <person name="Nori F."/>
            <person name="Ohara O."/>
            <person name="Okazaki Y."/>
            <person name="Orlando V."/>
            <person name="Pang K.C."/>
            <person name="Pavan W.J."/>
            <person name="Pavesi G."/>
            <person name="Pesole G."/>
            <person name="Petrovsky N."/>
            <person name="Piazza S."/>
            <person name="Reed J."/>
            <person name="Reid J.F."/>
            <person name="Ring B.Z."/>
            <person name="Ringwald M."/>
            <person name="Rost B."/>
            <person name="Ruan Y."/>
            <person name="Salzberg S.L."/>
            <person name="Sandelin A."/>
            <person name="Schneider C."/>
            <person name="Schoenbach C."/>
            <person name="Sekiguchi K."/>
            <person name="Semple C.A."/>
            <person name="Seno S."/>
            <person name="Sessa L."/>
            <person name="Sheng Y."/>
            <person name="Shibata Y."/>
            <person name="Shimada H."/>
            <person name="Shimada K."/>
            <person name="Silva D."/>
            <person name="Sinclair B."/>
            <person name="Sperling S."/>
            <person name="Stupka E."/>
            <person name="Sugiura K."/>
            <person name="Sultana R."/>
            <person name="Takenaka Y."/>
            <person name="Taki K."/>
            <person name="Tammoja K."/>
            <person name="Tan S.L."/>
            <person name="Tang S."/>
            <person name="Taylor M.S."/>
            <person name="Tegner J."/>
            <person name="Teichmann S.A."/>
            <person name="Ueda H.R."/>
            <person name="van Nimwegen E."/>
            <person name="Verardo R."/>
            <person name="Wei C.L."/>
            <person name="Yagi K."/>
            <person name="Yamanishi H."/>
            <person name="Zabarovsky E."/>
            <person name="Zhu S."/>
            <person name="Zimmer A."/>
            <person name="Hide W."/>
            <person name="Bult C."/>
            <person name="Grimmond S.M."/>
            <person name="Teasdale R.D."/>
            <person name="Liu E.T."/>
            <person name="Brusic V."/>
            <person name="Quackenbush J."/>
            <person name="Wahlestedt C."/>
            <person name="Mattick J.S."/>
            <person name="Hume D.A."/>
            <person name="Kai C."/>
            <person name="Sasaki D."/>
            <person name="Tomaru Y."/>
            <person name="Fukuda S."/>
            <person name="Kanamori-Katayama M."/>
            <person name="Suzuki M."/>
            <person name="Aoki J."/>
            <person name="Arakawa T."/>
            <person name="Iida J."/>
            <person name="Imamura K."/>
            <person name="Itoh M."/>
            <person name="Kato T."/>
            <person name="Kawaji H."/>
            <person name="Kawagashira N."/>
            <person name="Kawashima T."/>
            <person name="Kojima M."/>
            <person name="Kondo S."/>
            <person name="Konno H."/>
            <person name="Nakano K."/>
            <person name="Ninomiya N."/>
            <person name="Nishio T."/>
            <person name="Okada M."/>
            <person name="Plessy C."/>
            <person name="Shibata K."/>
            <person name="Shiraki T."/>
            <person name="Suzuki S."/>
            <person name="Tagami M."/>
            <person name="Waki K."/>
            <person name="Watahiki A."/>
            <person name="Okamura-Oho Y."/>
            <person name="Suzuki H."/>
            <person name="Kawai J."/>
            <person name="Hayashizaki Y."/>
        </authorList>
    </citation>
    <scope>NUCLEOTIDE SEQUENCE [LARGE SCALE MRNA]</scope>
    <source>
        <strain>C57BL/6J</strain>
        <tissue>Embryonic heart</tissue>
        <tissue>Kidney</tissue>
    </source>
</reference>
<reference key="3">
    <citation type="journal article" date="2004" name="Genome Res.">
        <title>The status, quality, and expansion of the NIH full-length cDNA project: the Mammalian Gene Collection (MGC).</title>
        <authorList>
            <consortium name="The MGC Project Team"/>
        </authorList>
    </citation>
    <scope>NUCLEOTIDE SEQUENCE [LARGE SCALE MRNA]</scope>
</reference>
<reference key="4">
    <citation type="journal article" date="1993" name="Proc. Natl. Acad. Sci. U.S.A.">
        <title>Positional specification of ventricular myosin light chain 2 expression in the primitive murine heart tube.</title>
        <authorList>
            <person name="O'Brien T.X."/>
            <person name="Lee K.J."/>
            <person name="Chien K.R."/>
        </authorList>
    </citation>
    <scope>DEVELOPMENTAL STAGE</scope>
</reference>
<reference key="5">
    <citation type="journal article" date="1998" name="J. Biol. Chem.">
        <title>Selective requirement of myosin light chain 2v in embryonic heart function.</title>
        <authorList>
            <person name="Chen J."/>
            <person name="Kubalak S.W."/>
            <person name="Minamisawa S."/>
            <person name="Price R.L."/>
            <person name="Becker K.D."/>
            <person name="Hickey R."/>
            <person name="Ross J. Jr."/>
            <person name="Chien K.R."/>
        </authorList>
    </citation>
    <scope>DISRUPTION PHENOTYPE</scope>
    <scope>FUNCTION</scope>
</reference>
<reference key="6">
    <citation type="journal article" date="1999" name="J. Biol. Chem.">
        <title>Abnormal cardiac structure and function in mice expressing nonphosphorylatable cardiac regulatory myosin light chain 2.</title>
        <authorList>
            <person name="Sanbe A."/>
            <person name="Fewell J.G."/>
            <person name="Gulick J."/>
            <person name="Osinska H."/>
            <person name="Lorenz J."/>
            <person name="Hall D.G."/>
            <person name="Murray L.A."/>
            <person name="Kimball T.R."/>
            <person name="Witt S.A."/>
            <person name="Robbins J."/>
        </authorList>
    </citation>
    <scope>MUTAGENESIS OF SER-14; SER-15 AND SER-19</scope>
    <scope>FUNCTION</scope>
</reference>
<reference key="7">
    <citation type="journal article" date="2006" name="J. Gen. Physiol.">
        <title>Acceleration of stretch activation in murine myocardium due to phosphorylation of myosin regulatory light chain.</title>
        <authorList>
            <person name="Stelzer J.E."/>
            <person name="Patel J.R."/>
            <person name="Moss R.L."/>
        </authorList>
    </citation>
    <scope>FUNCTION</scope>
</reference>
<reference key="8">
    <citation type="journal article" date="2010" name="Cell">
        <title>A tissue-specific atlas of mouse protein phosphorylation and expression.</title>
        <authorList>
            <person name="Huttlin E.L."/>
            <person name="Jedrychowski M.P."/>
            <person name="Elias J.E."/>
            <person name="Goswami T."/>
            <person name="Rad R."/>
            <person name="Beausoleil S.A."/>
            <person name="Villen J."/>
            <person name="Haas W."/>
            <person name="Sowa M.E."/>
            <person name="Gygi S.P."/>
        </authorList>
    </citation>
    <scope>PHOSPHORYLATION [LARGE SCALE ANALYSIS] AT SER-14; SER-15 AND SER-19</scope>
    <scope>IDENTIFICATION BY MASS SPECTROMETRY [LARGE SCALE ANALYSIS]</scope>
    <source>
        <tissue>Brown adipose tissue</tissue>
        <tissue>Heart</tissue>
        <tissue>Lung</tissue>
    </source>
</reference>
<reference key="9">
    <citation type="journal article" date="2010" name="J. Biol. Chem.">
        <title>Cardiac myosin is a substrate for zipper-interacting protein kinase (ZIPK).</title>
        <authorList>
            <person name="Chang A.N."/>
            <person name="Chen G."/>
            <person name="Gerard R.D."/>
            <person name="Kamm K.E."/>
            <person name="Stull J.T."/>
        </authorList>
    </citation>
    <scope>PHOSPHORYLATION BY DAPK3</scope>
</reference>
<reference key="10">
    <citation type="journal article" date="2010" name="Mol. Cell. Proteomics">
        <title>A novel, in-solution separation of endogenous cardiac sarcomeric proteins and identification of distinct charged variants of regulatory light chain.</title>
        <authorList>
            <person name="Scruggs S.B."/>
            <person name="Reisdorph R."/>
            <person name="Armstrong M.L."/>
            <person name="Warren C.M."/>
            <person name="Reisdorph N."/>
            <person name="Solaro R.J."/>
            <person name="Buttrick P.M."/>
        </authorList>
    </citation>
    <scope>PHOSPHORYLATION AT SER-14 AND SER-15</scope>
    <scope>IDENTIFICATION BY MASS SPECTROMETRY</scope>
</reference>
<reference key="11">
    <citation type="journal article" date="2010" name="Nature">
        <title>NRMT is an alpha-N-methyltransferase that methylates RCC1 and retinoblastoma protein.</title>
        <authorList>
            <person name="Tooley C.E."/>
            <person name="Petkowski J.J."/>
            <person name="Muratore-Schroeder T.L."/>
            <person name="Balsbaugh J.L."/>
            <person name="Shabanowitz J."/>
            <person name="Sabat M."/>
            <person name="Minor W."/>
            <person name="Hunt D.F."/>
            <person name="Macara I.G."/>
        </authorList>
    </citation>
    <scope>CLEAVAGE OF INITIATOR METHIONINE</scope>
    <scope>METHYLATION AT ALA-2</scope>
</reference>
<reference key="12">
    <citation type="journal article" date="2012" name="Circulation">
        <title>Myosin light chain phosphorylation is critical for adaptation to cardiac stress.</title>
        <authorList>
            <person name="Warren S.A."/>
            <person name="Briggs L.E."/>
            <person name="Zeng H."/>
            <person name="Chuang J."/>
            <person name="Chang E.I."/>
            <person name="Terada R."/>
            <person name="Li M."/>
            <person name="Swanson M.S."/>
            <person name="Lecker S.H."/>
            <person name="Willis M.S."/>
            <person name="Spinale F.G."/>
            <person name="Maupin-Furlowe J."/>
            <person name="McMullen J.R."/>
            <person name="Moss R.L."/>
            <person name="Kasahara H."/>
        </authorList>
    </citation>
    <scope>PHOSPHORYLATION BY MYLK3</scope>
</reference>
<reference key="13">
    <citation type="journal article" date="2012" name="J. Clin. Invest.">
        <title>Mouse and computational models link Mlc2v dephosphorylation to altered myosin kinetics in early cardiac disease.</title>
        <authorList>
            <person name="Sheikh F."/>
            <person name="Ouyang K."/>
            <person name="Campbell S.G."/>
            <person name="Lyon R.C."/>
            <person name="Chuang J."/>
            <person name="Fitzsimons D."/>
            <person name="Tangney J."/>
            <person name="Hidalgo C.G."/>
            <person name="Chung C.S."/>
            <person name="Cheng H."/>
            <person name="Dalton N.D."/>
            <person name="Gu Y."/>
            <person name="Kasahara H."/>
            <person name="Ghassemian M."/>
            <person name="Omens J.H."/>
            <person name="Peterson K.L."/>
            <person name="Granzier H.L."/>
            <person name="Moss R.L."/>
            <person name="McCulloch A.D."/>
            <person name="Chen J."/>
        </authorList>
    </citation>
    <scope>MUTAGENESIS OF SER-14 AND SER-15</scope>
    <scope>PHOSPHORYLATION AT SER-14 AND SER-15 BY MYLK3 AND MYLK2</scope>
    <scope>PHOSPHORYLATION AT SER-14; SER-15 AND SER-19</scope>
    <scope>IDENTIFICATION BY MASS SPECTROMETRY</scope>
    <scope>FUNCTION</scope>
    <scope>TISSUE SPECIFICITY</scope>
</reference>
<comment type="function">
    <text evidence="2 6 8 11 14">Contractile protein that plays a role in heart development and function (PubMed:10409661). Following phosphorylation, plays a role in cross-bridge cycling kinetics and cardiac muscle contraction by increasing myosin lever arm stiffness and promoting myosin head diffusion; as a consequence of the increase in maximum contraction force and calcium sensitivity of contraction force. These events altogether slow down myosin kinetics and prolong duty cycle resulting in accumulated myosins being cooperatively recruited to actin binding sites to sustain thin filament activation as a means to fine-tune myofilament calcium sensitivity to force (By similarity) (PubMed:10409661, PubMed:16908724, PubMed:22426213). During cardiogenesis plays an early role in cardiac contractility by promoting cardiac myofibril assembly (PubMed:9422794).</text>
</comment>
<comment type="subunit">
    <text evidence="1 3">Myosin is a hexamer of 2 heavy chains and 4 light chains (By similarity). Interacts with MYOC (By similarity).</text>
</comment>
<comment type="subcellular location">
    <subcellularLocation>
        <location evidence="2">Cytoplasm</location>
        <location evidence="2">Myofibril</location>
        <location evidence="2">Sarcomere</location>
        <location evidence="2">A band</location>
    </subcellularLocation>
</comment>
<comment type="tissue specificity">
    <text evidence="7 11">Abundantly expressed in both cardiac and slow skeletal muscle (PubMed:1379240). In the adult heart, the phosphorylated form is highly expressed in epicardium and weakly in endocardium (PubMed:22426213).</text>
</comment>
<comment type="developmental stage">
    <text evidence="13">At 8 dpc highly expressed in the ventricular portion of the heart tube, with no detectable expression in the atrial or sinus venosus regions; also expressed in the proximal outflow tract of the heart tube at minimally detectable levels. At 9-10 dpc expression is well established in the proximal outflow tract region adjacent to the ventricular segment. At 11 dpc, expression becomes restricted to the ventricular region.</text>
</comment>
<comment type="PTM">
    <text evidence="10">N-terminus is methylated by METTL11A/NTM1.</text>
</comment>
<comment type="PTM">
    <text evidence="2 11 12">Phosphorylated by MYLK3 and MYLK2; promotes cardiac muscle contraction and function. Dephosphorylated by PPP1CB complexed to PPP1R12B (By similarity). The phosphorylated form in adult is expressed as gradients across the heart from endocardium (low phosphorylation) to epicardium (high phosphorylation); regulates cardiac torsion and workload distribution (PubMed:22426213).</text>
</comment>
<comment type="disruption phenotype">
    <text evidence="14">Myl2 homozygous die at 12.5 dpc, which is associated with ultrastructural defects in ventricular sarcomere assembly, that included disruptions and disorganization of the normal parallel alignment of the thick and thin filaments, narrower fiber widths and larger distances between Z disks and misalignment of Z-band between sarcomeres.</text>
</comment>
<comment type="miscellaneous">
    <text>This chain binds calcium.</text>
</comment>
<organism>
    <name type="scientific">Mus musculus</name>
    <name type="common">Mouse</name>
    <dbReference type="NCBI Taxonomy" id="10090"/>
    <lineage>
        <taxon>Eukaryota</taxon>
        <taxon>Metazoa</taxon>
        <taxon>Chordata</taxon>
        <taxon>Craniata</taxon>
        <taxon>Vertebrata</taxon>
        <taxon>Euteleostomi</taxon>
        <taxon>Mammalia</taxon>
        <taxon>Eutheria</taxon>
        <taxon>Euarchontoglires</taxon>
        <taxon>Glires</taxon>
        <taxon>Rodentia</taxon>
        <taxon>Myomorpha</taxon>
        <taxon>Muroidea</taxon>
        <taxon>Muridae</taxon>
        <taxon>Murinae</taxon>
        <taxon>Mus</taxon>
        <taxon>Mus</taxon>
    </lineage>
</organism>